<gene>
    <name type="primary">Adcy1</name>
</gene>
<keyword id="KW-0067">ATP-binding</keyword>
<keyword id="KW-0090">Biological rhythms</keyword>
<keyword id="KW-0112">Calmodulin-binding</keyword>
<keyword id="KW-0115">cAMP biosynthesis</keyword>
<keyword id="KW-1003">Cell membrane</keyword>
<keyword id="KW-0963">Cytoplasm</keyword>
<keyword id="KW-0325">Glycoprotein</keyword>
<keyword id="KW-0456">Lyase</keyword>
<keyword id="KW-0460">Magnesium</keyword>
<keyword id="KW-0464">Manganese</keyword>
<keyword id="KW-0472">Membrane</keyword>
<keyword id="KW-0479">Metal-binding</keyword>
<keyword id="KW-0547">Nucleotide-binding</keyword>
<keyword id="KW-0597">Phosphoprotein</keyword>
<keyword id="KW-1185">Reference proteome</keyword>
<keyword id="KW-0677">Repeat</keyword>
<keyword id="KW-0812">Transmembrane</keyword>
<keyword id="KW-1133">Transmembrane helix</keyword>
<accession>O88444</accession>
<accession>Q5SS89</accession>
<proteinExistence type="evidence at protein level"/>
<feature type="chain" id="PRO_0000195683" description="Adenylate cyclase type 1">
    <location>
        <begin position="1"/>
        <end position="1118"/>
    </location>
</feature>
<feature type="topological domain" description="Cytoplasmic" evidence="5">
    <location>
        <begin position="1"/>
        <end position="62"/>
    </location>
</feature>
<feature type="transmembrane region" description="Helical" evidence="5">
    <location>
        <begin position="63"/>
        <end position="83"/>
    </location>
</feature>
<feature type="transmembrane region" description="Helical" evidence="5">
    <location>
        <begin position="87"/>
        <end position="107"/>
    </location>
</feature>
<feature type="transmembrane region" description="Helical" evidence="5">
    <location>
        <begin position="124"/>
        <end position="144"/>
    </location>
</feature>
<feature type="transmembrane region" description="Helical" evidence="5">
    <location>
        <begin position="157"/>
        <end position="177"/>
    </location>
</feature>
<feature type="transmembrane region" description="Helical" evidence="5">
    <location>
        <begin position="182"/>
        <end position="202"/>
    </location>
</feature>
<feature type="transmembrane region" description="Helical" evidence="5">
    <location>
        <begin position="213"/>
        <end position="233"/>
    </location>
</feature>
<feature type="topological domain" description="Cytoplasmic" evidence="5">
    <location>
        <begin position="234"/>
        <end position="609"/>
    </location>
</feature>
<feature type="transmembrane region" description="Helical" evidence="5">
    <location>
        <begin position="610"/>
        <end position="630"/>
    </location>
</feature>
<feature type="transmembrane region" description="Helical" evidence="5">
    <location>
        <begin position="634"/>
        <end position="654"/>
    </location>
</feature>
<feature type="transmembrane region" description="Helical" evidence="5">
    <location>
        <begin position="673"/>
        <end position="693"/>
    </location>
</feature>
<feature type="transmembrane region" description="Helical" evidence="5">
    <location>
        <begin position="724"/>
        <end position="744"/>
    </location>
</feature>
<feature type="transmembrane region" description="Helical" evidence="5">
    <location>
        <begin position="752"/>
        <end position="772"/>
    </location>
</feature>
<feature type="transmembrane region" description="Helical" evidence="5">
    <location>
        <begin position="774"/>
        <end position="793"/>
    </location>
</feature>
<feature type="topological domain" description="Cytoplasmic" evidence="5">
    <location>
        <begin position="794"/>
        <end position="1118"/>
    </location>
</feature>
<feature type="region of interest" description="Disordered" evidence="7">
    <location>
        <begin position="1"/>
        <end position="27"/>
    </location>
</feature>
<feature type="region of interest" description="Interaction with calmodulin" evidence="1">
    <location>
        <begin position="492"/>
        <end position="519"/>
    </location>
</feature>
<feature type="region of interest" description="Interaction with calmodulin" evidence="1">
    <location>
        <begin position="1023"/>
        <end position="1046"/>
    </location>
</feature>
<feature type="region of interest" description="Disordered" evidence="7">
    <location>
        <begin position="1079"/>
        <end position="1118"/>
    </location>
</feature>
<feature type="compositionally biased region" description="Gly residues" evidence="7">
    <location>
        <begin position="1"/>
        <end position="18"/>
    </location>
</feature>
<feature type="compositionally biased region" description="Pro residues" evidence="7">
    <location>
        <begin position="1087"/>
        <end position="1104"/>
    </location>
</feature>
<feature type="compositionally biased region" description="Polar residues" evidence="7">
    <location>
        <begin position="1105"/>
        <end position="1118"/>
    </location>
</feature>
<feature type="binding site" evidence="4">
    <location>
        <begin position="307"/>
        <end position="312"/>
    </location>
    <ligand>
        <name>ATP</name>
        <dbReference type="ChEBI" id="CHEBI:30616"/>
    </ligand>
</feature>
<feature type="binding site" evidence="6">
    <location>
        <position position="307"/>
    </location>
    <ligand>
        <name>Mg(2+)</name>
        <dbReference type="ChEBI" id="CHEBI:18420"/>
        <label>1</label>
        <note>catalytic</note>
    </ligand>
</feature>
<feature type="binding site" evidence="6">
    <location>
        <position position="307"/>
    </location>
    <ligand>
        <name>Mg(2+)</name>
        <dbReference type="ChEBI" id="CHEBI:18420"/>
        <label>2</label>
        <note>catalytic</note>
    </ligand>
</feature>
<feature type="binding site" evidence="6">
    <location>
        <position position="308"/>
    </location>
    <ligand>
        <name>Mg(2+)</name>
        <dbReference type="ChEBI" id="CHEBI:18420"/>
        <label>2</label>
        <note>catalytic</note>
    </ligand>
</feature>
<feature type="binding site" evidence="4">
    <location>
        <begin position="349"/>
        <end position="351"/>
    </location>
    <ligand>
        <name>ATP</name>
        <dbReference type="ChEBI" id="CHEBI:30616"/>
    </ligand>
</feature>
<feature type="binding site" evidence="6">
    <location>
        <position position="351"/>
    </location>
    <ligand>
        <name>Mg(2+)</name>
        <dbReference type="ChEBI" id="CHEBI:18420"/>
        <label>1</label>
        <note>catalytic</note>
    </ligand>
</feature>
<feature type="binding site" evidence="6">
    <location>
        <position position="351"/>
    </location>
    <ligand>
        <name>Mg(2+)</name>
        <dbReference type="ChEBI" id="CHEBI:18420"/>
        <label>2</label>
        <note>catalytic</note>
    </ligand>
</feature>
<feature type="binding site" evidence="4">
    <location>
        <position position="395"/>
    </location>
    <ligand>
        <name>ATP</name>
        <dbReference type="ChEBI" id="CHEBI:30616"/>
    </ligand>
</feature>
<feature type="binding site" evidence="3">
    <location>
        <position position="919"/>
    </location>
    <ligand>
        <name>ATP</name>
        <dbReference type="ChEBI" id="CHEBI:30616"/>
    </ligand>
</feature>
<feature type="binding site" evidence="3">
    <location>
        <begin position="996"/>
        <end position="998"/>
    </location>
    <ligand>
        <name>ATP</name>
        <dbReference type="ChEBI" id="CHEBI:30616"/>
    </ligand>
</feature>
<feature type="binding site" evidence="3">
    <location>
        <begin position="1003"/>
        <end position="1007"/>
    </location>
    <ligand>
        <name>ATP</name>
        <dbReference type="ChEBI" id="CHEBI:30616"/>
    </ligand>
</feature>
<feature type="binding site" evidence="3">
    <location>
        <position position="1043"/>
    </location>
    <ligand>
        <name>ATP</name>
        <dbReference type="ChEBI" id="CHEBI:30616"/>
    </ligand>
</feature>
<feature type="modified residue" description="Phosphoserine" evidence="13">
    <location>
        <position position="550"/>
    </location>
</feature>
<feature type="glycosylation site" description="N-linked (GlcNAc...) asparagine" evidence="5">
    <location>
        <position position="703"/>
    </location>
</feature>
<feature type="sequence conflict" description="In Ref. 2; AAC29478." evidence="12" ref="2">
    <original>SSAGGAMGS</original>
    <variation>ALQEAQWAR</variation>
    <location>
        <begin position="147"/>
        <end position="155"/>
    </location>
</feature>
<feature type="sequence conflict" description="In Ref. 2; AAC29478." evidence="12" ref="2">
    <original>T</original>
    <variation>A</variation>
    <location>
        <position position="234"/>
    </location>
</feature>
<feature type="sequence conflict" description="In Ref. 2; AAC29478." evidence="12" ref="2">
    <original>L</original>
    <variation>M</variation>
    <location>
        <position position="270"/>
    </location>
</feature>
<feature type="sequence conflict" description="In Ref. 2; AAC29478." evidence="12" ref="2">
    <original>T</original>
    <variation>K</variation>
    <location>
        <position position="319"/>
    </location>
</feature>
<feature type="sequence conflict" description="In Ref. 2; AAC29478." evidence="12" ref="2">
    <original>R</original>
    <variation>K</variation>
    <location>
        <position position="466"/>
    </location>
</feature>
<feature type="sequence conflict" description="In Ref. 2; AAC29478." evidence="12" ref="2">
    <original>F</original>
    <variation>I</variation>
    <location>
        <position position="523"/>
    </location>
</feature>
<feature type="sequence conflict" description="In Ref. 2; AAC29478." evidence="12" ref="2">
    <original>S</original>
    <variation>T</variation>
    <location>
        <position position="542"/>
    </location>
</feature>
<feature type="sequence conflict" description="In Ref. 2; AAC29478." evidence="12" ref="2">
    <original>S</original>
    <variation>T</variation>
    <location>
        <position position="549"/>
    </location>
</feature>
<feature type="sequence conflict" description="In Ref. 2; AAC29478." evidence="12" ref="2">
    <original>R</original>
    <variation>L</variation>
    <location>
        <position position="570"/>
    </location>
</feature>
<feature type="sequence conflict" description="In Ref. 2; AAC29478." evidence="12" ref="2">
    <original>Q</original>
    <variation>R</variation>
    <location>
        <position position="598"/>
    </location>
</feature>
<feature type="sequence conflict" description="In Ref. 2; AAC29478." evidence="12" ref="2">
    <original>G</original>
    <variation>V</variation>
    <location>
        <position position="692"/>
    </location>
</feature>
<feature type="sequence conflict" description="In Ref. 2; AAC29478." evidence="12" ref="2">
    <original>A</original>
    <variation>S</variation>
    <location>
        <position position="697"/>
    </location>
</feature>
<feature type="sequence conflict" description="In Ref. 2; AAC29478." evidence="12" ref="2">
    <original>V</original>
    <variation>L</variation>
    <location>
        <position position="707"/>
    </location>
</feature>
<feature type="sequence conflict" description="In Ref. 2; AAC29478." evidence="12" ref="2">
    <original>G</original>
    <variation>C</variation>
    <location>
        <position position="713"/>
    </location>
</feature>
<feature type="sequence conflict" description="In Ref. 2; AAC29478." evidence="12" ref="2">
    <original>AL</original>
    <variation>GP</variation>
    <location>
        <begin position="720"/>
        <end position="721"/>
    </location>
</feature>
<feature type="sequence conflict" description="In Ref. 2; AAC29478." evidence="12" ref="2">
    <original>VGG</original>
    <variation>AMGA</variation>
    <location>
        <begin position="774"/>
        <end position="776"/>
    </location>
</feature>
<feature type="sequence conflict" description="In Ref. 2; AAC29478." evidence="12" ref="2">
    <original>GVM</original>
    <variation>AVL</variation>
    <location>
        <begin position="867"/>
        <end position="869"/>
    </location>
</feature>
<feature type="sequence conflict" description="In Ref. 2; AAC29478." evidence="12" ref="2">
    <original>R</original>
    <variation>K</variation>
    <location>
        <position position="938"/>
    </location>
</feature>
<feature type="sequence conflict" description="In Ref. 2; AAC29478." evidence="12" ref="2">
    <original>R</original>
    <variation>C</variation>
    <location>
        <position position="991"/>
    </location>
</feature>
<feature type="sequence conflict" description="In Ref. 2; AAC29478." evidence="12" ref="2">
    <original>T</original>
    <variation>I</variation>
    <location>
        <position position="1020"/>
    </location>
</feature>
<feature type="sequence conflict" description="In Ref. 2; AAC29478." evidence="12" ref="2">
    <original>C</original>
    <variation>S</variation>
    <location>
        <position position="1030"/>
    </location>
</feature>
<reference key="1">
    <citation type="journal article" date="2009" name="PLoS Biol.">
        <title>Lineage-specific biology revealed by a finished genome assembly of the mouse.</title>
        <authorList>
            <person name="Church D.M."/>
            <person name="Goodstadt L."/>
            <person name="Hillier L.W."/>
            <person name="Zody M.C."/>
            <person name="Goldstein S."/>
            <person name="She X."/>
            <person name="Bult C.J."/>
            <person name="Agarwala R."/>
            <person name="Cherry J.L."/>
            <person name="DiCuccio M."/>
            <person name="Hlavina W."/>
            <person name="Kapustin Y."/>
            <person name="Meric P."/>
            <person name="Maglott D."/>
            <person name="Birtle Z."/>
            <person name="Marques A.C."/>
            <person name="Graves T."/>
            <person name="Zhou S."/>
            <person name="Teague B."/>
            <person name="Potamousis K."/>
            <person name="Churas C."/>
            <person name="Place M."/>
            <person name="Herschleb J."/>
            <person name="Runnheim R."/>
            <person name="Forrest D."/>
            <person name="Amos-Landgraf J."/>
            <person name="Schwartz D.C."/>
            <person name="Cheng Z."/>
            <person name="Lindblad-Toh K."/>
            <person name="Eichler E.E."/>
            <person name="Ponting C.P."/>
        </authorList>
    </citation>
    <scope>NUCLEOTIDE SEQUENCE [LARGE SCALE GENOMIC DNA]</scope>
    <source>
        <strain>C57BL/6J</strain>
    </source>
</reference>
<reference key="2">
    <citation type="journal article" date="1998" name="Nat. Genet.">
        <title>Loss of adenylyl cyclase I activity disrupts patterning of mouse somatosensory cortex.</title>
        <authorList>
            <person name="Abdel-Majid R.M."/>
            <person name="Leong W.L."/>
            <person name="Schalkwyk L.C."/>
            <person name="Smallman D.S."/>
            <person name="Wong S.T."/>
            <person name="Storm D.R."/>
            <person name="Fine A."/>
            <person name="Dobson M.J."/>
            <person name="Guernsey D.L."/>
            <person name="Neumann P.E."/>
        </authorList>
    </citation>
    <scope>NUCLEOTIDE SEQUENCE [MRNA] OF 100-1050</scope>
    <scope>FUNCTION</scope>
    <scope>CATALYTIC ACTIVITY</scope>
    <scope>ACTIVITY REGULATION</scope>
    <scope>SUBCELLULAR LOCATION</scope>
    <source>
        <strain>C57BL/6J</strain>
        <tissue>Brain</tissue>
    </source>
</reference>
<reference key="3">
    <citation type="journal article" date="1995" name="Proc. Natl. Acad. Sci. U.S.A.">
        <title>Altered behavior and long-term potentiation in type I adenylyl cyclase mutant mice.</title>
        <authorList>
            <person name="Wu Z.L."/>
            <person name="Thomas S.A."/>
            <person name="Villacres E.C."/>
            <person name="Xia Z."/>
            <person name="Simmons M.L."/>
            <person name="Chavkin C."/>
            <person name="Palmiter R.D."/>
            <person name="Storm D.R."/>
        </authorList>
    </citation>
    <scope>FUNCTION</scope>
    <scope>DISRUPTION PHENOTYPE</scope>
</reference>
<reference key="4">
    <citation type="journal article" date="2010" name="Cell">
        <title>A tissue-specific atlas of mouse protein phosphorylation and expression.</title>
        <authorList>
            <person name="Huttlin E.L."/>
            <person name="Jedrychowski M.P."/>
            <person name="Elias J.E."/>
            <person name="Goswami T."/>
            <person name="Rad R."/>
            <person name="Beausoleil S.A."/>
            <person name="Villen J."/>
            <person name="Haas W."/>
            <person name="Sowa M.E."/>
            <person name="Gygi S.P."/>
        </authorList>
    </citation>
    <scope>PHOSPHORYLATION [LARGE SCALE ANALYSIS] AT SER-550</scope>
    <scope>IDENTIFICATION BY MASS SPECTROMETRY [LARGE SCALE ANALYSIS]</scope>
    <source>
        <tissue>Brain</tissue>
    </source>
</reference>
<reference key="5">
    <citation type="journal article" date="2013" name="J. Neurosci.">
        <title>Circadian rhythm of contrast sensitivity is regulated by a dopamine-neuronal PAS-domain protein 2-adenylyl cyclase 1 signaling pathway in retinal ganglion cells.</title>
        <authorList>
            <person name="Hwang C.K."/>
            <person name="Chaurasia S.S."/>
            <person name="Jackson C.R."/>
            <person name="Chan G.C."/>
            <person name="Storm D.R."/>
            <person name="Iuvone P.M."/>
        </authorList>
    </citation>
    <scope>FUNCTION</scope>
    <scope>INDUCTION</scope>
    <scope>DISRUPTION PHENOTYPE</scope>
</reference>
<reference key="6">
    <citation type="journal article" date="2014" name="Hum. Mol. Genet.">
        <title>Adenylate cyclase 1 (ADCY1) mutations cause recessive hearing impairment in humans and defects in hair cell function and hearing in zebrafish.</title>
        <authorList>
            <person name="Santos-Cortez R.L."/>
            <person name="Lee K."/>
            <person name="Giese A.P."/>
            <person name="Ansar M."/>
            <person name="Amin-Ud-Din M."/>
            <person name="Rehn K."/>
            <person name="Wang X."/>
            <person name="Aziz A."/>
            <person name="Chiu I."/>
            <person name="Hussain Ali R."/>
            <person name="Smith J.D."/>
            <person name="Shendure J."/>
            <person name="Bamshad M."/>
            <person name="Nickerson D.A."/>
            <person name="Ahmed Z.M."/>
            <person name="Ahmad W."/>
            <person name="Riazuddin S."/>
            <person name="Leal S.M."/>
        </authorList>
    </citation>
    <scope>SUBCELLULAR LOCATION</scope>
    <scope>TISSUE SPECIFICITY</scope>
</reference>
<evidence type="ECO:0000250" key="1"/>
<evidence type="ECO:0000250" key="2">
    <source>
        <dbReference type="UniProtKB" id="P19754"/>
    </source>
</evidence>
<evidence type="ECO:0000250" key="3">
    <source>
        <dbReference type="UniProtKB" id="P26769"/>
    </source>
</evidence>
<evidence type="ECO:0000250" key="4">
    <source>
        <dbReference type="UniProtKB" id="P30803"/>
    </source>
</evidence>
<evidence type="ECO:0000255" key="5"/>
<evidence type="ECO:0000255" key="6">
    <source>
        <dbReference type="PROSITE-ProRule" id="PRU00099"/>
    </source>
</evidence>
<evidence type="ECO:0000256" key="7">
    <source>
        <dbReference type="SAM" id="MobiDB-lite"/>
    </source>
</evidence>
<evidence type="ECO:0000269" key="8">
    <source>
    </source>
</evidence>
<evidence type="ECO:0000269" key="9">
    <source>
    </source>
</evidence>
<evidence type="ECO:0000269" key="10">
    <source>
    </source>
</evidence>
<evidence type="ECO:0000269" key="11">
    <source>
    </source>
</evidence>
<evidence type="ECO:0000305" key="12"/>
<evidence type="ECO:0007744" key="13">
    <source>
    </source>
</evidence>
<name>ADCY1_MOUSE</name>
<sequence>MAGAPRGQGGGGGAGEPGGAERAAGPGGRRGFRACGEEFACPELEALFRGYTLRLEQAATLKALAVLSLLAGALALAELLGAPGPAPGLAKGSHPVHCILFLALFVVTNVRSLQVSQLQQVGQLALFFSLTFALLCCPFALGGPARSSAGGAMGSTVAEQGVWQLLLVTFVSYALLPVRSLLAIGFGLVVAASHLLVTAALVPAKRPRLWRTLGANALLFFGVNMYGVFVRILTERSQRKAFLQARNCIEDRLRLEDENEKQERLLMSLLPRNVAMEMKEDFLKPPERIFHKIYIQRHDNVSILFADIVGFTGLASQCTAQELVKLLNELFGKFDELATENHCRRIKILGDCYYCVSGLTQPKTDHAHCCVEMGLDMIDTITSVAEATEVDLNMRVGLHTGRVLCGVLGLRKWQYDVWSNDVTLANVMEAAGLPGKVHITKTTLACLNGDYEVEPGHGHERNTFLRTHNIETFFIVPSHRRKIFPGLILSDIKPAKRMKFKTVCYLLVQLMHCRKMFKAEIPFSNVMTCEDDDKRRALRTASEKLRNRSSFSTNVVYTTPGTRVNRYISRLLEARQTELEMADLNFFTLKYKHVEREQKYHQLQDEYFTSAVVLALILAALFGLIYLLVIPQSVAVLLLLVFSICFLVACTLYLHITRVQCFPGCLTIQIRTALCVFIVVLIYSVAQGCVVGCLPWAWSSQSNSSLVVLAAGGRRTVLPALPCESAHHALLCCLVGTLPLAIFLRVSSLPKMILLSGLTTSYILVLELSGYTKVGGGALSGRSYEPIMAILLFSCTLALHARQVDVRLRLDYLWAAQAEEERDDMERVKLDNKRILFNLLPAHVAQHFLMSNPRNMDLYYQSYSQVGVMFASIPNFNDFYIELDGNNMGVECLRLLNEIIADFDELMDKDFYKDLEKIKTIGSTYMAAVGLAPTAGTRAKKSISSHLCTLADFAIDMFDVLDEINYQSYNDFVLRVGINVGPVVAGVIGARRPQYDIWGNTVNVASRMDSTGVQGRIQVTEEVHRLLKRCSYQFVCRGKVSVKGKGEMLTYFLEGRTDGNSSHGRTFRLERRMCPYGRGGGQARRPPLCPAAGPPVRPGLPPAPTSQYLSSTAAGKEA</sequence>
<dbReference type="EC" id="4.6.1.1" evidence="11"/>
<dbReference type="EMBL" id="AL669838">
    <property type="status" value="NOT_ANNOTATED_CDS"/>
    <property type="molecule type" value="Genomic_DNA"/>
</dbReference>
<dbReference type="EMBL" id="AF053980">
    <property type="protein sequence ID" value="AAC29478.1"/>
    <property type="molecule type" value="mRNA"/>
</dbReference>
<dbReference type="CCDS" id="CCDS24426.1"/>
<dbReference type="RefSeq" id="NP_033752.1">
    <property type="nucleotide sequence ID" value="NM_009622.2"/>
</dbReference>
<dbReference type="SMR" id="O88444"/>
<dbReference type="BioGRID" id="240661">
    <property type="interactions" value="2"/>
</dbReference>
<dbReference type="FunCoup" id="O88444">
    <property type="interactions" value="1179"/>
</dbReference>
<dbReference type="STRING" id="10090.ENSMUSP00000020706"/>
<dbReference type="GlyCosmos" id="O88444">
    <property type="glycosylation" value="1 site, No reported glycans"/>
</dbReference>
<dbReference type="GlyGen" id="O88444">
    <property type="glycosylation" value="2 sites"/>
</dbReference>
<dbReference type="iPTMnet" id="O88444"/>
<dbReference type="PhosphoSitePlus" id="O88444"/>
<dbReference type="SwissPalm" id="O88444"/>
<dbReference type="PaxDb" id="10090-ENSMUSP00000020706"/>
<dbReference type="PeptideAtlas" id="O88444"/>
<dbReference type="ProteomicsDB" id="285683"/>
<dbReference type="Antibodypedia" id="4335">
    <property type="antibodies" value="241 antibodies from 29 providers"/>
</dbReference>
<dbReference type="Ensembl" id="ENSMUST00000020706.5">
    <property type="protein sequence ID" value="ENSMUSP00000020706.5"/>
    <property type="gene ID" value="ENSMUSG00000020431.6"/>
</dbReference>
<dbReference type="GeneID" id="432530"/>
<dbReference type="KEGG" id="mmu:432530"/>
<dbReference type="UCSC" id="uc007hzf.1">
    <property type="organism name" value="mouse"/>
</dbReference>
<dbReference type="AGR" id="MGI:99677"/>
<dbReference type="CTD" id="107"/>
<dbReference type="MGI" id="MGI:99677">
    <property type="gene designation" value="Adcy1"/>
</dbReference>
<dbReference type="VEuPathDB" id="HostDB:ENSMUSG00000020431"/>
<dbReference type="eggNOG" id="KOG3619">
    <property type="taxonomic scope" value="Eukaryota"/>
</dbReference>
<dbReference type="GeneTree" id="ENSGT00940000154872"/>
<dbReference type="HOGENOM" id="CLU_001072_2_1_1"/>
<dbReference type="InParanoid" id="O88444"/>
<dbReference type="OMA" id="WAWSSQS"/>
<dbReference type="OrthoDB" id="6147412at2759"/>
<dbReference type="PhylomeDB" id="O88444"/>
<dbReference type="TreeFam" id="TF313845"/>
<dbReference type="BRENDA" id="4.6.1.1">
    <property type="organism ID" value="3474"/>
</dbReference>
<dbReference type="Reactome" id="R-MMU-163615">
    <property type="pathway name" value="PKA activation"/>
</dbReference>
<dbReference type="Reactome" id="R-MMU-170660">
    <property type="pathway name" value="Adenylate cyclase activating pathway"/>
</dbReference>
<dbReference type="Reactome" id="R-MMU-170670">
    <property type="pathway name" value="Adenylate cyclase inhibitory pathway"/>
</dbReference>
<dbReference type="Reactome" id="R-MMU-418597">
    <property type="pathway name" value="G alpha (z) signalling events"/>
</dbReference>
<dbReference type="Reactome" id="R-MMU-5610787">
    <property type="pathway name" value="Hedgehog 'off' state"/>
</dbReference>
<dbReference type="BioGRID-ORCS" id="432530">
    <property type="hits" value="1 hit in 76 CRISPR screens"/>
</dbReference>
<dbReference type="ChiTaRS" id="Adcy1">
    <property type="organism name" value="mouse"/>
</dbReference>
<dbReference type="PRO" id="PR:O88444"/>
<dbReference type="Proteomes" id="UP000000589">
    <property type="component" value="Chromosome 11"/>
</dbReference>
<dbReference type="RNAct" id="O88444">
    <property type="molecule type" value="protein"/>
</dbReference>
<dbReference type="Bgee" id="ENSMUSG00000020431">
    <property type="expression patterns" value="Expressed in cerebellum lobe and 213 other cell types or tissues"/>
</dbReference>
<dbReference type="GO" id="GO:0005737">
    <property type="term" value="C:cytoplasm"/>
    <property type="evidence" value="ECO:0000314"/>
    <property type="project" value="UniProtKB"/>
</dbReference>
<dbReference type="GO" id="GO:0098978">
    <property type="term" value="C:glutamatergic synapse"/>
    <property type="evidence" value="ECO:0000314"/>
    <property type="project" value="SynGO"/>
</dbReference>
<dbReference type="GO" id="GO:0098686">
    <property type="term" value="C:hippocampal mossy fiber to CA3 synapse"/>
    <property type="evidence" value="ECO:0000314"/>
    <property type="project" value="SynGO"/>
</dbReference>
<dbReference type="GO" id="GO:0045121">
    <property type="term" value="C:membrane raft"/>
    <property type="evidence" value="ECO:0007669"/>
    <property type="project" value="UniProtKB-SubCell"/>
</dbReference>
<dbReference type="GO" id="GO:0005886">
    <property type="term" value="C:plasma membrane"/>
    <property type="evidence" value="ECO:0000250"/>
    <property type="project" value="UniProtKB"/>
</dbReference>
<dbReference type="GO" id="GO:0014069">
    <property type="term" value="C:postsynaptic density"/>
    <property type="evidence" value="ECO:0000314"/>
    <property type="project" value="UniProtKB"/>
</dbReference>
<dbReference type="GO" id="GO:0098839">
    <property type="term" value="C:postsynaptic density membrane"/>
    <property type="evidence" value="ECO:0000314"/>
    <property type="project" value="SynGO"/>
</dbReference>
<dbReference type="GO" id="GO:0098793">
    <property type="term" value="C:presynapse"/>
    <property type="evidence" value="ECO:0007669"/>
    <property type="project" value="GOC"/>
</dbReference>
<dbReference type="GO" id="GO:0098685">
    <property type="term" value="C:Schaffer collateral - CA1 synapse"/>
    <property type="evidence" value="ECO:0000314"/>
    <property type="project" value="SynGO"/>
</dbReference>
<dbReference type="GO" id="GO:0004016">
    <property type="term" value="F:adenylate cyclase activity"/>
    <property type="evidence" value="ECO:0000316"/>
    <property type="project" value="MGI"/>
</dbReference>
<dbReference type="GO" id="GO:0005524">
    <property type="term" value="F:ATP binding"/>
    <property type="evidence" value="ECO:0007669"/>
    <property type="project" value="UniProtKB-KW"/>
</dbReference>
<dbReference type="GO" id="GO:0008294">
    <property type="term" value="F:calcium- and calmodulin-responsive adenylate cyclase activity"/>
    <property type="evidence" value="ECO:0000250"/>
    <property type="project" value="UniProtKB"/>
</dbReference>
<dbReference type="GO" id="GO:0005516">
    <property type="term" value="F:calmodulin binding"/>
    <property type="evidence" value="ECO:0007669"/>
    <property type="project" value="UniProtKB-KW"/>
</dbReference>
<dbReference type="GO" id="GO:0046872">
    <property type="term" value="F:metal ion binding"/>
    <property type="evidence" value="ECO:0007669"/>
    <property type="project" value="UniProtKB-KW"/>
</dbReference>
<dbReference type="GO" id="GO:0007189">
    <property type="term" value="P:adenylate cyclase-activating G protein-coupled receptor signaling pathway"/>
    <property type="evidence" value="ECO:0000250"/>
    <property type="project" value="UniProtKB"/>
</dbReference>
<dbReference type="GO" id="GO:0007409">
    <property type="term" value="P:axonogenesis"/>
    <property type="evidence" value="ECO:0000315"/>
    <property type="project" value="MGI"/>
</dbReference>
<dbReference type="GO" id="GO:0006171">
    <property type="term" value="P:cAMP biosynthetic process"/>
    <property type="evidence" value="ECO:0000250"/>
    <property type="project" value="UniProtKB"/>
</dbReference>
<dbReference type="GO" id="GO:0071277">
    <property type="term" value="P:cellular response to calcium ion"/>
    <property type="evidence" value="ECO:0000250"/>
    <property type="project" value="UniProtKB"/>
</dbReference>
<dbReference type="GO" id="GO:1904322">
    <property type="term" value="P:cellular response to forskolin"/>
    <property type="evidence" value="ECO:0000250"/>
    <property type="project" value="UniProtKB"/>
</dbReference>
<dbReference type="GO" id="GO:0035556">
    <property type="term" value="P:intracellular signal transduction"/>
    <property type="evidence" value="ECO:0007669"/>
    <property type="project" value="InterPro"/>
</dbReference>
<dbReference type="GO" id="GO:0007616">
    <property type="term" value="P:long-term memory"/>
    <property type="evidence" value="ECO:0000316"/>
    <property type="project" value="MGI"/>
</dbReference>
<dbReference type="GO" id="GO:0050804">
    <property type="term" value="P:modulation of chemical synaptic transmission"/>
    <property type="evidence" value="ECO:0000314"/>
    <property type="project" value="SynGO"/>
</dbReference>
<dbReference type="GO" id="GO:0150076">
    <property type="term" value="P:neuroinflammatory response"/>
    <property type="evidence" value="ECO:0000315"/>
    <property type="project" value="UniProtKB"/>
</dbReference>
<dbReference type="GO" id="GO:0032793">
    <property type="term" value="P:positive regulation of CREB transcription factor activity"/>
    <property type="evidence" value="ECO:0000315"/>
    <property type="project" value="UniProtKB"/>
</dbReference>
<dbReference type="GO" id="GO:1900273">
    <property type="term" value="P:positive regulation of long-term synaptic potentiation"/>
    <property type="evidence" value="ECO:0000315"/>
    <property type="project" value="UniProtKB"/>
</dbReference>
<dbReference type="GO" id="GO:0099171">
    <property type="term" value="P:presynaptic modulation of chemical synaptic transmission"/>
    <property type="evidence" value="ECO:0000314"/>
    <property type="project" value="SynGO"/>
</dbReference>
<dbReference type="GO" id="GO:0042752">
    <property type="term" value="P:regulation of circadian rhythm"/>
    <property type="evidence" value="ECO:0000315"/>
    <property type="project" value="UniProtKB"/>
</dbReference>
<dbReference type="GO" id="GO:0048511">
    <property type="term" value="P:rhythmic process"/>
    <property type="evidence" value="ECO:0007669"/>
    <property type="project" value="UniProtKB-KW"/>
</dbReference>
<dbReference type="CDD" id="cd07302">
    <property type="entry name" value="CHD"/>
    <property type="match status" value="2"/>
</dbReference>
<dbReference type="FunFam" id="3.30.70.1230:FF:000001">
    <property type="entry name" value="Adenylate cyclase"/>
    <property type="match status" value="1"/>
</dbReference>
<dbReference type="FunFam" id="3.30.70.1230:FF:000002">
    <property type="entry name" value="Adenylate cyclase"/>
    <property type="match status" value="1"/>
</dbReference>
<dbReference type="Gene3D" id="3.30.70.1230">
    <property type="entry name" value="Nucleotide cyclase"/>
    <property type="match status" value="2"/>
</dbReference>
<dbReference type="InterPro" id="IPR001054">
    <property type="entry name" value="A/G_cyclase"/>
</dbReference>
<dbReference type="InterPro" id="IPR018297">
    <property type="entry name" value="A/G_cyclase_CS"/>
</dbReference>
<dbReference type="InterPro" id="IPR032628">
    <property type="entry name" value="AC_N"/>
</dbReference>
<dbReference type="InterPro" id="IPR030672">
    <property type="entry name" value="Adcy"/>
</dbReference>
<dbReference type="InterPro" id="IPR029787">
    <property type="entry name" value="Nucleotide_cyclase"/>
</dbReference>
<dbReference type="PANTHER" id="PTHR45627">
    <property type="entry name" value="ADENYLATE CYCLASE TYPE 1"/>
    <property type="match status" value="1"/>
</dbReference>
<dbReference type="PANTHER" id="PTHR45627:SF26">
    <property type="entry name" value="ADENYLATE CYCLASE TYPE 1"/>
    <property type="match status" value="1"/>
</dbReference>
<dbReference type="Pfam" id="PF16214">
    <property type="entry name" value="AC_N"/>
    <property type="match status" value="1"/>
</dbReference>
<dbReference type="Pfam" id="PF00211">
    <property type="entry name" value="Guanylate_cyc"/>
    <property type="match status" value="2"/>
</dbReference>
<dbReference type="PIRSF" id="PIRSF039050">
    <property type="entry name" value="Ade_cyc"/>
    <property type="match status" value="1"/>
</dbReference>
<dbReference type="SMART" id="SM00044">
    <property type="entry name" value="CYCc"/>
    <property type="match status" value="2"/>
</dbReference>
<dbReference type="SUPFAM" id="SSF55073">
    <property type="entry name" value="Nucleotide cyclase"/>
    <property type="match status" value="2"/>
</dbReference>
<dbReference type="PROSITE" id="PS00452">
    <property type="entry name" value="GUANYLATE_CYCLASE_1"/>
    <property type="match status" value="2"/>
</dbReference>
<dbReference type="PROSITE" id="PS50125">
    <property type="entry name" value="GUANYLATE_CYCLASE_2"/>
    <property type="match status" value="2"/>
</dbReference>
<comment type="function">
    <text evidence="8 10 11">Catalyzes the formation of the signaling molecule cAMP in response to G-protein signaling. Mediates responses to increased cellular Ca(2+)/calmodulin levels (PubMed:7816821, PubMed:9662407). May be involved in regulatory processes in the central nervous system (PubMed:9662407). May play a role in memory and learning (PubMed:7816821). Plays a role in the regulation of the circadian rhythm of daytime contrast sensitivity probably by modulating the rhythmic synthesis of cyclic AMP in the retina (PubMed:24048828).</text>
</comment>
<comment type="catalytic activity">
    <reaction evidence="11">
        <text>ATP = 3',5'-cyclic AMP + diphosphate</text>
        <dbReference type="Rhea" id="RHEA:15389"/>
        <dbReference type="ChEBI" id="CHEBI:30616"/>
        <dbReference type="ChEBI" id="CHEBI:33019"/>
        <dbReference type="ChEBI" id="CHEBI:58165"/>
        <dbReference type="EC" id="4.6.1.1"/>
    </reaction>
</comment>
<comment type="cofactor">
    <cofactor evidence="2">
        <name>Mg(2+)</name>
        <dbReference type="ChEBI" id="CHEBI:18420"/>
    </cofactor>
    <cofactor evidence="2">
        <name>Mn(2+)</name>
        <dbReference type="ChEBI" id="CHEBI:29035"/>
    </cofactor>
    <text evidence="4">Binds 2 magnesium ions per subunit. Is also active with manganese (in vitro).</text>
</comment>
<comment type="activity regulation">
    <text evidence="2 11">Activated by G(s) G alpha protein GNAS (By similarity). Inhibited by G(i) G alpha protein GNAI1 (By similarity). Is further activated by the complex formed by GNB1 and GNG2 (By similarity). Activated by calcium/calmodulin (PubMed:9662407). Inhibited by the ATP analogs adenosine, 2'-deoxyadenosine and 2'-deoxy-3'-AMP (By similarity).</text>
</comment>
<comment type="subunit">
    <text evidence="2">Interacts with CALM.</text>
</comment>
<comment type="subcellular location">
    <subcellularLocation>
        <location evidence="11">Membrane</location>
        <topology evidence="12">Multi-pass membrane protein</topology>
    </subcellularLocation>
    <subcellularLocation>
        <location evidence="2">Cell membrane</location>
        <topology evidence="2">Multi-pass membrane protein</topology>
    </subcellularLocation>
    <subcellularLocation>
        <location evidence="9">Cytoplasm</location>
    </subcellularLocation>
    <subcellularLocation>
        <location evidence="2">Membrane raft</location>
    </subcellularLocation>
    <text evidence="9">Expressed in the cytoplasm of supporting cells and hair cells of the cochlea vestibule, as well as to the cochlear hair cell nuclei and stereocilia|.</text>
</comment>
<comment type="tissue specificity">
    <text evidence="9">Expressed throughout inner ear development.</text>
</comment>
<comment type="induction">
    <text evidence="8">Expression in the retina oscillates in a circadian manner.</text>
</comment>
<comment type="domain">
    <text evidence="4">The protein contains two modules with six transmembrane helices each; both are required for catalytic activity. Isolated N-terminal or C-terminal modules have no catalytic activity, but when they are brought together, enzyme activity is restored. The active site is at the interface of the two modules.</text>
</comment>
<comment type="PTM">
    <text evidence="2">N-glycosylated.</text>
</comment>
<comment type="disruption phenotype">
    <text evidence="8 10">Mice appear grossly normal and healthy, but have decreased levels of calmodulin-sensitive adenylyl cyclase activity in the brain (PubMed:7816821). They show impaired spatial memory (PubMed:7816821). Mice show a significant reduction in daytime contrast sensitivity (PubMed:24048828).</text>
</comment>
<comment type="similarity">
    <text evidence="6">Belongs to the adenylyl cyclase class-4/guanylyl cyclase family.</text>
</comment>
<organism>
    <name type="scientific">Mus musculus</name>
    <name type="common">Mouse</name>
    <dbReference type="NCBI Taxonomy" id="10090"/>
    <lineage>
        <taxon>Eukaryota</taxon>
        <taxon>Metazoa</taxon>
        <taxon>Chordata</taxon>
        <taxon>Craniata</taxon>
        <taxon>Vertebrata</taxon>
        <taxon>Euteleostomi</taxon>
        <taxon>Mammalia</taxon>
        <taxon>Eutheria</taxon>
        <taxon>Euarchontoglires</taxon>
        <taxon>Glires</taxon>
        <taxon>Rodentia</taxon>
        <taxon>Myomorpha</taxon>
        <taxon>Muroidea</taxon>
        <taxon>Muridae</taxon>
        <taxon>Murinae</taxon>
        <taxon>Mus</taxon>
        <taxon>Mus</taxon>
    </lineage>
</organism>
<protein>
    <recommendedName>
        <fullName>Adenylate cyclase type 1</fullName>
        <ecNumber evidence="11">4.6.1.1</ecNumber>
    </recommendedName>
    <alternativeName>
        <fullName>ATP pyrophosphate-lyase 1</fullName>
    </alternativeName>
    <alternativeName>
        <fullName>Adenylate cyclase type I</fullName>
    </alternativeName>
    <alternativeName>
        <fullName>Adenylyl cyclase 1</fullName>
    </alternativeName>
    <alternativeName>
        <fullName>Ca(2+)/calmodulin-activated adenylyl cyclase</fullName>
    </alternativeName>
</protein>